<comment type="function">
    <text evidence="1">IGPS catalyzes the conversion of PRFAR and glutamine to IGP, AICAR and glutamate. The HisH subunit catalyzes the hydrolysis of glutamine to glutamate and ammonia as part of the synthesis of IGP and AICAR. The resulting ammonia molecule is channeled to the active site of HisF.</text>
</comment>
<comment type="catalytic activity">
    <reaction evidence="1">
        <text>5-[(5-phospho-1-deoxy-D-ribulos-1-ylimino)methylamino]-1-(5-phospho-beta-D-ribosyl)imidazole-4-carboxamide + L-glutamine = D-erythro-1-(imidazol-4-yl)glycerol 3-phosphate + 5-amino-1-(5-phospho-beta-D-ribosyl)imidazole-4-carboxamide + L-glutamate + H(+)</text>
        <dbReference type="Rhea" id="RHEA:24793"/>
        <dbReference type="ChEBI" id="CHEBI:15378"/>
        <dbReference type="ChEBI" id="CHEBI:29985"/>
        <dbReference type="ChEBI" id="CHEBI:58278"/>
        <dbReference type="ChEBI" id="CHEBI:58359"/>
        <dbReference type="ChEBI" id="CHEBI:58475"/>
        <dbReference type="ChEBI" id="CHEBI:58525"/>
        <dbReference type="EC" id="4.3.2.10"/>
    </reaction>
</comment>
<comment type="catalytic activity">
    <reaction evidence="1">
        <text>L-glutamine + H2O = L-glutamate + NH4(+)</text>
        <dbReference type="Rhea" id="RHEA:15889"/>
        <dbReference type="ChEBI" id="CHEBI:15377"/>
        <dbReference type="ChEBI" id="CHEBI:28938"/>
        <dbReference type="ChEBI" id="CHEBI:29985"/>
        <dbReference type="ChEBI" id="CHEBI:58359"/>
        <dbReference type="EC" id="3.5.1.2"/>
    </reaction>
</comment>
<comment type="pathway">
    <text evidence="1">Amino-acid biosynthesis; L-histidine biosynthesis; L-histidine from 5-phospho-alpha-D-ribose 1-diphosphate: step 5/9.</text>
</comment>
<comment type="subunit">
    <text evidence="1">Heterodimer of HisH and HisF.</text>
</comment>
<comment type="subcellular location">
    <subcellularLocation>
        <location evidence="1">Cytoplasm</location>
    </subcellularLocation>
</comment>
<dbReference type="EC" id="4.3.2.10" evidence="1"/>
<dbReference type="EC" id="3.5.1.2" evidence="1"/>
<dbReference type="EMBL" id="AE005674">
    <property type="protein sequence ID" value="AAN43625.1"/>
    <property type="molecule type" value="Genomic_DNA"/>
</dbReference>
<dbReference type="EMBL" id="AE014073">
    <property type="protein sequence ID" value="AAP17453.1"/>
    <property type="molecule type" value="Genomic_DNA"/>
</dbReference>
<dbReference type="RefSeq" id="NP_707918.1">
    <property type="nucleotide sequence ID" value="NC_004337.2"/>
</dbReference>
<dbReference type="RefSeq" id="WP_001103547.1">
    <property type="nucleotide sequence ID" value="NZ_WPGW01000112.1"/>
</dbReference>
<dbReference type="SMR" id="Q83KJ5"/>
<dbReference type="STRING" id="198214.SF2085"/>
<dbReference type="MEROPS" id="C26.965"/>
<dbReference type="PaxDb" id="198214-SF2085"/>
<dbReference type="GeneID" id="1025298"/>
<dbReference type="KEGG" id="sfl:SF2085"/>
<dbReference type="KEGG" id="sfx:S2206"/>
<dbReference type="PATRIC" id="fig|198214.7.peg.2494"/>
<dbReference type="HOGENOM" id="CLU_071837_0_0_6"/>
<dbReference type="UniPathway" id="UPA00031">
    <property type="reaction ID" value="UER00010"/>
</dbReference>
<dbReference type="Proteomes" id="UP000001006">
    <property type="component" value="Chromosome"/>
</dbReference>
<dbReference type="Proteomes" id="UP000002673">
    <property type="component" value="Chromosome"/>
</dbReference>
<dbReference type="GO" id="GO:0005737">
    <property type="term" value="C:cytoplasm"/>
    <property type="evidence" value="ECO:0007669"/>
    <property type="project" value="UniProtKB-SubCell"/>
</dbReference>
<dbReference type="GO" id="GO:0004359">
    <property type="term" value="F:glutaminase activity"/>
    <property type="evidence" value="ECO:0007669"/>
    <property type="project" value="UniProtKB-EC"/>
</dbReference>
<dbReference type="GO" id="GO:0000107">
    <property type="term" value="F:imidazoleglycerol-phosphate synthase activity"/>
    <property type="evidence" value="ECO:0007669"/>
    <property type="project" value="UniProtKB-UniRule"/>
</dbReference>
<dbReference type="GO" id="GO:0016829">
    <property type="term" value="F:lyase activity"/>
    <property type="evidence" value="ECO:0007669"/>
    <property type="project" value="UniProtKB-KW"/>
</dbReference>
<dbReference type="GO" id="GO:0000105">
    <property type="term" value="P:L-histidine biosynthetic process"/>
    <property type="evidence" value="ECO:0007669"/>
    <property type="project" value="UniProtKB-UniRule"/>
</dbReference>
<dbReference type="CDD" id="cd01748">
    <property type="entry name" value="GATase1_IGP_Synthase"/>
    <property type="match status" value="1"/>
</dbReference>
<dbReference type="FunFam" id="3.40.50.880:FF:000009">
    <property type="entry name" value="Imidazole glycerol phosphate synthase subunit HisH"/>
    <property type="match status" value="1"/>
</dbReference>
<dbReference type="Gene3D" id="3.40.50.880">
    <property type="match status" value="1"/>
</dbReference>
<dbReference type="HAMAP" id="MF_00278">
    <property type="entry name" value="HisH"/>
    <property type="match status" value="1"/>
</dbReference>
<dbReference type="InterPro" id="IPR029062">
    <property type="entry name" value="Class_I_gatase-like"/>
</dbReference>
<dbReference type="InterPro" id="IPR017926">
    <property type="entry name" value="GATASE"/>
</dbReference>
<dbReference type="InterPro" id="IPR010139">
    <property type="entry name" value="Imidazole-glycPsynth_HisH"/>
</dbReference>
<dbReference type="NCBIfam" id="TIGR01855">
    <property type="entry name" value="IMP_synth_hisH"/>
    <property type="match status" value="1"/>
</dbReference>
<dbReference type="PANTHER" id="PTHR42701">
    <property type="entry name" value="IMIDAZOLE GLYCEROL PHOSPHATE SYNTHASE SUBUNIT HISH"/>
    <property type="match status" value="1"/>
</dbReference>
<dbReference type="PANTHER" id="PTHR42701:SF1">
    <property type="entry name" value="IMIDAZOLE GLYCEROL PHOSPHATE SYNTHASE SUBUNIT HISH"/>
    <property type="match status" value="1"/>
</dbReference>
<dbReference type="Pfam" id="PF00117">
    <property type="entry name" value="GATase"/>
    <property type="match status" value="1"/>
</dbReference>
<dbReference type="PIRSF" id="PIRSF000495">
    <property type="entry name" value="Amidotransf_hisH"/>
    <property type="match status" value="1"/>
</dbReference>
<dbReference type="PRINTS" id="PR00096">
    <property type="entry name" value="GATASE"/>
</dbReference>
<dbReference type="SUPFAM" id="SSF52317">
    <property type="entry name" value="Class I glutamine amidotransferase-like"/>
    <property type="match status" value="1"/>
</dbReference>
<dbReference type="PROSITE" id="PS51273">
    <property type="entry name" value="GATASE_TYPE_1"/>
    <property type="match status" value="1"/>
</dbReference>
<protein>
    <recommendedName>
        <fullName evidence="1">Imidazole glycerol phosphate synthase subunit HisH</fullName>
        <ecNumber evidence="1">4.3.2.10</ecNumber>
    </recommendedName>
    <alternativeName>
        <fullName evidence="1">IGP synthase glutaminase subunit</fullName>
        <ecNumber evidence="1">3.5.1.2</ecNumber>
    </alternativeName>
    <alternativeName>
        <fullName evidence="1">IGP synthase subunit HisH</fullName>
    </alternativeName>
    <alternativeName>
        <fullName evidence="1">ImGP synthase subunit HisH</fullName>
        <shortName evidence="1">IGPS subunit HisH</shortName>
    </alternativeName>
</protein>
<accession>Q83KJ5</accession>
<organism>
    <name type="scientific">Shigella flexneri</name>
    <dbReference type="NCBI Taxonomy" id="623"/>
    <lineage>
        <taxon>Bacteria</taxon>
        <taxon>Pseudomonadati</taxon>
        <taxon>Pseudomonadota</taxon>
        <taxon>Gammaproteobacteria</taxon>
        <taxon>Enterobacterales</taxon>
        <taxon>Enterobacteriaceae</taxon>
        <taxon>Shigella</taxon>
    </lineage>
</organism>
<keyword id="KW-0028">Amino-acid biosynthesis</keyword>
<keyword id="KW-0963">Cytoplasm</keyword>
<keyword id="KW-0315">Glutamine amidotransferase</keyword>
<keyword id="KW-0368">Histidine biosynthesis</keyword>
<keyword id="KW-0378">Hydrolase</keyword>
<keyword id="KW-0456">Lyase</keyword>
<keyword id="KW-1185">Reference proteome</keyword>
<proteinExistence type="inferred from homology"/>
<evidence type="ECO:0000255" key="1">
    <source>
        <dbReference type="HAMAP-Rule" id="MF_00278"/>
    </source>
</evidence>
<reference key="1">
    <citation type="journal article" date="2002" name="Nucleic Acids Res.">
        <title>Genome sequence of Shigella flexneri 2a: insights into pathogenicity through comparison with genomes of Escherichia coli K12 and O157.</title>
        <authorList>
            <person name="Jin Q."/>
            <person name="Yuan Z."/>
            <person name="Xu J."/>
            <person name="Wang Y."/>
            <person name="Shen Y."/>
            <person name="Lu W."/>
            <person name="Wang J."/>
            <person name="Liu H."/>
            <person name="Yang J."/>
            <person name="Yang F."/>
            <person name="Zhang X."/>
            <person name="Zhang J."/>
            <person name="Yang G."/>
            <person name="Wu H."/>
            <person name="Qu D."/>
            <person name="Dong J."/>
            <person name="Sun L."/>
            <person name="Xue Y."/>
            <person name="Zhao A."/>
            <person name="Gao Y."/>
            <person name="Zhu J."/>
            <person name="Kan B."/>
            <person name="Ding K."/>
            <person name="Chen S."/>
            <person name="Cheng H."/>
            <person name="Yao Z."/>
            <person name="He B."/>
            <person name="Chen R."/>
            <person name="Ma D."/>
            <person name="Qiang B."/>
            <person name="Wen Y."/>
            <person name="Hou Y."/>
            <person name="Yu J."/>
        </authorList>
    </citation>
    <scope>NUCLEOTIDE SEQUENCE [LARGE SCALE GENOMIC DNA]</scope>
    <source>
        <strain>301 / Serotype 2a</strain>
    </source>
</reference>
<reference key="2">
    <citation type="journal article" date="2003" name="Infect. Immun.">
        <title>Complete genome sequence and comparative genomics of Shigella flexneri serotype 2a strain 2457T.</title>
        <authorList>
            <person name="Wei J."/>
            <person name="Goldberg M.B."/>
            <person name="Burland V."/>
            <person name="Venkatesan M.M."/>
            <person name="Deng W."/>
            <person name="Fournier G."/>
            <person name="Mayhew G.F."/>
            <person name="Plunkett G. III"/>
            <person name="Rose D.J."/>
            <person name="Darling A."/>
            <person name="Mau B."/>
            <person name="Perna N.T."/>
            <person name="Payne S.M."/>
            <person name="Runyen-Janecky L.J."/>
            <person name="Zhou S."/>
            <person name="Schwartz D.C."/>
            <person name="Blattner F.R."/>
        </authorList>
    </citation>
    <scope>NUCLEOTIDE SEQUENCE [LARGE SCALE GENOMIC DNA]</scope>
    <source>
        <strain>ATCC 700930 / 2457T / Serotype 2a</strain>
    </source>
</reference>
<feature type="chain" id="PRO_0000152421" description="Imidazole glycerol phosphate synthase subunit HisH">
    <location>
        <begin position="1"/>
        <end position="196"/>
    </location>
</feature>
<feature type="domain" description="Glutamine amidotransferase type-1" evidence="1">
    <location>
        <begin position="2"/>
        <end position="196"/>
    </location>
</feature>
<feature type="active site" description="Nucleophile" evidence="1">
    <location>
        <position position="77"/>
    </location>
</feature>
<feature type="active site" evidence="1">
    <location>
        <position position="178"/>
    </location>
</feature>
<feature type="active site" evidence="1">
    <location>
        <position position="180"/>
    </location>
</feature>
<sequence>MNVVILDTGCANLNSVKSAIARHGYEPKVSRDPDIVLLADKLFLPGVGTAQAAMDQVRERELFDLIKACTQPVLGICLGMQLLGRRSEESNGVDLLGIIDEDVPKMTDFGLPLPHMGWNRVYPQAGNRLFQGIEDGAYFYFVHSYAMPVNPWTIAQCNYGEPFTAAVQKDNFYGVQFHPERSGAAGAKLLKNFLEM</sequence>
<gene>
    <name evidence="1" type="primary">hisH</name>
    <name type="ordered locus">SF2085</name>
    <name type="ordered locus">S2206</name>
</gene>
<name>HIS5_SHIFL</name>